<sequence length="112" mass="13035">MLNEQKCEACSIDAIALSKEEQQSLLLQLSDWQIIERDEIPQLEKVYKFKNFKQAWAFSNKIAELAEDEFHHPSILLEWGKVTITWWSHSIKGLHKNDFICASKCDALAIEE</sequence>
<comment type="catalytic activity">
    <reaction evidence="1">
        <text>(4aS,6R)-4a-hydroxy-L-erythro-5,6,7,8-tetrahydrobiopterin = (6R)-L-erythro-6,7-dihydrobiopterin + H2O</text>
        <dbReference type="Rhea" id="RHEA:11920"/>
        <dbReference type="ChEBI" id="CHEBI:15377"/>
        <dbReference type="ChEBI" id="CHEBI:15642"/>
        <dbReference type="ChEBI" id="CHEBI:43120"/>
        <dbReference type="EC" id="4.2.1.96"/>
    </reaction>
</comment>
<comment type="similarity">
    <text evidence="1">Belongs to the pterin-4-alpha-carbinolamine dehydratase family.</text>
</comment>
<organism>
    <name type="scientific">Vibrio campbellii (strain ATCC BAA-1116)</name>
    <dbReference type="NCBI Taxonomy" id="2902295"/>
    <lineage>
        <taxon>Bacteria</taxon>
        <taxon>Pseudomonadati</taxon>
        <taxon>Pseudomonadota</taxon>
        <taxon>Gammaproteobacteria</taxon>
        <taxon>Vibrionales</taxon>
        <taxon>Vibrionaceae</taxon>
        <taxon>Vibrio</taxon>
    </lineage>
</organism>
<keyword id="KW-0456">Lyase</keyword>
<evidence type="ECO:0000255" key="1">
    <source>
        <dbReference type="HAMAP-Rule" id="MF_00434"/>
    </source>
</evidence>
<name>PHS_VIBC1</name>
<dbReference type="EC" id="4.2.1.96" evidence="1"/>
<dbReference type="EMBL" id="CP000790">
    <property type="protein sequence ID" value="ABU73327.1"/>
    <property type="molecule type" value="Genomic_DNA"/>
</dbReference>
<dbReference type="RefSeq" id="WP_005433587.1">
    <property type="nucleotide sequence ID" value="NC_022270.1"/>
</dbReference>
<dbReference type="SMR" id="A7N3S9"/>
<dbReference type="KEGG" id="vha:VIBHAR_05422"/>
<dbReference type="PATRIC" id="fig|338187.25.peg.4819"/>
<dbReference type="Proteomes" id="UP000008152">
    <property type="component" value="Chromosome II"/>
</dbReference>
<dbReference type="GO" id="GO:0008124">
    <property type="term" value="F:4-alpha-hydroxytetrahydrobiopterin dehydratase activity"/>
    <property type="evidence" value="ECO:0007669"/>
    <property type="project" value="UniProtKB-UniRule"/>
</dbReference>
<dbReference type="GO" id="GO:0006729">
    <property type="term" value="P:tetrahydrobiopterin biosynthetic process"/>
    <property type="evidence" value="ECO:0007669"/>
    <property type="project" value="InterPro"/>
</dbReference>
<dbReference type="CDD" id="cd00913">
    <property type="entry name" value="PCD_DCoH_subfamily_a"/>
    <property type="match status" value="1"/>
</dbReference>
<dbReference type="Gene3D" id="3.30.1360.20">
    <property type="entry name" value="Transcriptional coactivator/pterin dehydratase"/>
    <property type="match status" value="1"/>
</dbReference>
<dbReference type="HAMAP" id="MF_00434">
    <property type="entry name" value="Pterin_4_alpha"/>
    <property type="match status" value="1"/>
</dbReference>
<dbReference type="InterPro" id="IPR036428">
    <property type="entry name" value="PCD_sf"/>
</dbReference>
<dbReference type="InterPro" id="IPR050376">
    <property type="entry name" value="Pterin-4-alpha-carb_dehyd"/>
</dbReference>
<dbReference type="InterPro" id="IPR001533">
    <property type="entry name" value="Pterin_deHydtase"/>
</dbReference>
<dbReference type="NCBIfam" id="NF002016">
    <property type="entry name" value="PRK00823.1-1"/>
    <property type="match status" value="1"/>
</dbReference>
<dbReference type="PANTHER" id="PTHR42805">
    <property type="entry name" value="PTERIN-4-ALPHA-CARBINOLAMINE DEHYDRATASE-RELATED"/>
    <property type="match status" value="1"/>
</dbReference>
<dbReference type="PANTHER" id="PTHR42805:SF1">
    <property type="entry name" value="PTERIN-4-ALPHA-CARBINOLAMINE DEHYDRATASE-RELATED"/>
    <property type="match status" value="1"/>
</dbReference>
<dbReference type="Pfam" id="PF01329">
    <property type="entry name" value="Pterin_4a"/>
    <property type="match status" value="1"/>
</dbReference>
<dbReference type="SUPFAM" id="SSF55248">
    <property type="entry name" value="PCD-like"/>
    <property type="match status" value="1"/>
</dbReference>
<feature type="chain" id="PRO_1000050469" description="Putative pterin-4-alpha-carbinolamine dehydratase">
    <location>
        <begin position="1"/>
        <end position="112"/>
    </location>
</feature>
<protein>
    <recommendedName>
        <fullName evidence="1">Putative pterin-4-alpha-carbinolamine dehydratase</fullName>
        <shortName evidence="1">PHS</shortName>
        <ecNumber evidence="1">4.2.1.96</ecNumber>
    </recommendedName>
    <alternativeName>
        <fullName evidence="1">4-alpha-hydroxy-tetrahydropterin dehydratase</fullName>
    </alternativeName>
    <alternativeName>
        <fullName evidence="1">Pterin carbinolamine dehydratase</fullName>
        <shortName evidence="1">PCD</shortName>
    </alternativeName>
</protein>
<reference key="1">
    <citation type="submission" date="2007-08" db="EMBL/GenBank/DDBJ databases">
        <authorList>
            <consortium name="The Vibrio harveyi Genome Sequencing Project"/>
            <person name="Bassler B."/>
            <person name="Clifton S.W."/>
            <person name="Fulton L."/>
            <person name="Delehaunty K."/>
            <person name="Fronick C."/>
            <person name="Harrison M."/>
            <person name="Markivic C."/>
            <person name="Fulton R."/>
            <person name="Tin-Wollam A.-M."/>
            <person name="Shah N."/>
            <person name="Pepin K."/>
            <person name="Nash W."/>
            <person name="Thiruvilangam P."/>
            <person name="Bhonagiri V."/>
            <person name="Waters C."/>
            <person name="Tu K.C."/>
            <person name="Irgon J."/>
            <person name="Wilson R.K."/>
        </authorList>
    </citation>
    <scope>NUCLEOTIDE SEQUENCE [LARGE SCALE GENOMIC DNA]</scope>
    <source>
        <strain>ATCC BAA-1116 / BB120</strain>
    </source>
</reference>
<proteinExistence type="inferred from homology"/>
<accession>A7N3S9</accession>
<gene>
    <name type="ordered locus">VIBHAR_05422</name>
</gene>